<proteinExistence type="inferred from homology"/>
<evidence type="ECO:0000255" key="1"/>
<evidence type="ECO:0000305" key="2"/>
<comment type="function">
    <text>A possible function for this protein is to guide the assembly of the membrane sector of the ATPase enzyme complex.</text>
</comment>
<comment type="subcellular location">
    <subcellularLocation>
        <location evidence="2">Cell membrane</location>
        <topology evidence="2">Multi-pass membrane protein</topology>
    </subcellularLocation>
</comment>
<comment type="miscellaneous">
    <text>The ATPase of P.modestum is of special interest because it uses sodium ions instead of protons as the physiological coupling ion.</text>
</comment>
<comment type="similarity">
    <text evidence="2">Belongs to the bacterial AtpI family.</text>
</comment>
<gene>
    <name type="primary">atpI</name>
    <name type="synonym">uncI</name>
</gene>
<accession>P29705</accession>
<protein>
    <recommendedName>
        <fullName>ATP synthase protein I, sodium ion specific</fullName>
    </recommendedName>
</protein>
<dbReference type="EMBL" id="X66102">
    <property type="protein sequence ID" value="CAA46893.1"/>
    <property type="molecule type" value="Genomic_DNA"/>
</dbReference>
<dbReference type="EMBL" id="X58461">
    <property type="protein sequence ID" value="CAA41367.1"/>
    <property type="molecule type" value="Genomic_DNA"/>
</dbReference>
<dbReference type="PIR" id="S24366">
    <property type="entry name" value="S24366"/>
</dbReference>
<dbReference type="TCDB" id="1.A.77.3.29">
    <property type="family name" value="the mg(2+)/ca(2+) uniporter (mcu) family"/>
</dbReference>
<dbReference type="GO" id="GO:0005886">
    <property type="term" value="C:plasma membrane"/>
    <property type="evidence" value="ECO:0007669"/>
    <property type="project" value="UniProtKB-SubCell"/>
</dbReference>
<dbReference type="GO" id="GO:0045259">
    <property type="term" value="C:proton-transporting ATP synthase complex"/>
    <property type="evidence" value="ECO:0007669"/>
    <property type="project" value="UniProtKB-KW"/>
</dbReference>
<dbReference type="GO" id="GO:1902600">
    <property type="term" value="P:proton transmembrane transport"/>
    <property type="evidence" value="ECO:0007669"/>
    <property type="project" value="UniProtKB-KW"/>
</dbReference>
<dbReference type="GO" id="GO:0006814">
    <property type="term" value="P:sodium ion transport"/>
    <property type="evidence" value="ECO:0007669"/>
    <property type="project" value="UniProtKB-KW"/>
</dbReference>
<dbReference type="InterPro" id="IPR005598">
    <property type="entry name" value="ATP_synth_I"/>
</dbReference>
<dbReference type="Pfam" id="PF03899">
    <property type="entry name" value="ATP-synt_I"/>
    <property type="match status" value="1"/>
</dbReference>
<name>ATPZ_PROMO</name>
<reference key="1">
    <citation type="journal article" date="1992" name="Eur. J. Biochem.">
        <title>Cloning, sequencing and in vivo expression of genes encoding the F0 part of the sodium-ion-dependent ATP synthase of Propionigenium modestum in Escherichia coli.</title>
        <authorList>
            <person name="Kaim G.W."/>
            <person name="Ludwig W."/>
            <person name="Dimroth P."/>
            <person name="Schleifer K.H."/>
        </authorList>
    </citation>
    <scope>NUCLEOTIDE SEQUENCE [GENOMIC DNA]</scope>
    <source>
        <strain>DSM 2376 / Gra Succ2</strain>
    </source>
</reference>
<reference key="2">
    <citation type="journal article" date="1990" name="Nucleic Acids Res.">
        <title>Nucleotide sequence of the F0 subunits of the sodium dependent F1F0 ATPase of Propionigenium modestum.</title>
        <authorList>
            <person name="Esser U."/>
            <person name="Krumholz L.R."/>
            <person name="Simoni R.D."/>
        </authorList>
    </citation>
    <scope>NUCLEOTIDE SEQUENCE [GENOMIC DNA]</scope>
    <source>
        <strain>DSM 2376 / Gra Succ2</strain>
    </source>
</reference>
<reference key="3">
    <citation type="journal article" date="1992" name="FEMS Microbiol. Lett.">
        <title>Characterization of the genes coding for the F1F0 subunits of the sodium dependent ATPase of Propionigenium modestum.</title>
        <authorList>
            <person name="Krumholz L.R."/>
            <person name="Esser U."/>
            <person name="Simoni R.D."/>
        </authorList>
    </citation>
    <scope>NUCLEOTIDE SEQUENCE [GENOMIC DNA]</scope>
    <source>
        <strain>DSM 2376 / Gra Succ2</strain>
    </source>
</reference>
<keyword id="KW-1003">Cell membrane</keyword>
<keyword id="KW-0138">CF(0)</keyword>
<keyword id="KW-0375">Hydrogen ion transport</keyword>
<keyword id="KW-0406">Ion transport</keyword>
<keyword id="KW-0472">Membrane</keyword>
<keyword id="KW-0915">Sodium</keyword>
<keyword id="KW-0739">Sodium transport</keyword>
<keyword id="KW-0812">Transmembrane</keyword>
<keyword id="KW-1133">Transmembrane helix</keyword>
<keyword id="KW-0813">Transport</keyword>
<sequence length="127" mass="14338">MNQEIKKILKNSLITSLIVLVYGIVVRNPIVYFGMFVGCLISTFCFYMICQEAESAMKSGSPFKMTVTGYMKRYAIYGIYLGILVKFFGFPVFLGGAVGLLNIKFNIFLKVVSTQFEKIKKKLSSLK</sequence>
<feature type="chain" id="PRO_0000071709" description="ATP synthase protein I, sodium ion specific">
    <location>
        <begin position="1"/>
        <end position="127"/>
    </location>
</feature>
<feature type="transmembrane region" description="Helical" evidence="1">
    <location>
        <begin position="5"/>
        <end position="25"/>
    </location>
</feature>
<feature type="transmembrane region" description="Helical" evidence="1">
    <location>
        <begin position="30"/>
        <end position="50"/>
    </location>
</feature>
<feature type="transmembrane region" description="Helical" evidence="1">
    <location>
        <begin position="81"/>
        <end position="101"/>
    </location>
</feature>
<organism>
    <name type="scientific">Propionigenium modestum</name>
    <dbReference type="NCBI Taxonomy" id="2333"/>
    <lineage>
        <taxon>Bacteria</taxon>
        <taxon>Fusobacteriati</taxon>
        <taxon>Fusobacteriota</taxon>
        <taxon>Fusobacteriia</taxon>
        <taxon>Fusobacteriales</taxon>
        <taxon>Fusobacteriaceae</taxon>
        <taxon>Propionigenium</taxon>
    </lineage>
</organism>